<organism>
    <name type="scientific">Bos indicus</name>
    <name type="common">Zebu</name>
    <dbReference type="NCBI Taxonomy" id="9915"/>
    <lineage>
        <taxon>Eukaryota</taxon>
        <taxon>Metazoa</taxon>
        <taxon>Chordata</taxon>
        <taxon>Craniata</taxon>
        <taxon>Vertebrata</taxon>
        <taxon>Euteleostomi</taxon>
        <taxon>Mammalia</taxon>
        <taxon>Eutheria</taxon>
        <taxon>Laurasiatheria</taxon>
        <taxon>Artiodactyla</taxon>
        <taxon>Ruminantia</taxon>
        <taxon>Pecora</taxon>
        <taxon>Bovidae</taxon>
        <taxon>Bovinae</taxon>
        <taxon>Bos</taxon>
    </lineage>
</organism>
<name>FETA_BOSIN</name>
<reference evidence="6" key="1">
    <citation type="journal article" date="2002" name="Reprod. Nutr. Dev.">
        <title>Characterization of pregnancy-associated glycoproteins extracted from zebu (Bos indicus) placentas removed at different gestational periods.</title>
        <authorList>
            <person name="Sousa N.M."/>
            <person name="Remy B."/>
            <person name="El Amiri B."/>
            <person name="De Figueiredo J.R."/>
            <person name="Banga-Mboko H."/>
            <person name="Dias Goncalves P.B."/>
            <person name="Beckers J.-F.M.P."/>
        </authorList>
    </citation>
    <scope>PROTEIN SEQUENCE</scope>
    <scope>TISSUE SPECIFICITY</scope>
    <scope>GLYCOSYLATION</scope>
    <source>
        <tissue evidence="4">Fetal cotyledon</tissue>
    </source>
</reference>
<sequence>DKNAYGIDLIL</sequence>
<gene>
    <name type="primary">AFP</name>
</gene>
<proteinExistence type="evidence at protein level"/>
<accession>P83128</accession>
<comment type="function">
    <text evidence="1">Binds copper, nickel, and fatty acids as well as, and bilirubin less well than, serum albumin.</text>
</comment>
<comment type="subunit">
    <text evidence="2">Dimeric and trimeric forms have been found in addition to the monomeric form.</text>
</comment>
<comment type="subcellular location">
    <subcellularLocation>
        <location>Secreted</location>
    </subcellularLocation>
</comment>
<comment type="tissue specificity">
    <text evidence="4">Placenta.</text>
</comment>
<comment type="PTM">
    <text evidence="4">Glycosylated.</text>
</comment>
<comment type="similarity">
    <text evidence="3">Belongs to the ALB/AFP/VDB family.</text>
</comment>
<dbReference type="GO" id="GO:0005576">
    <property type="term" value="C:extracellular region"/>
    <property type="evidence" value="ECO:0007669"/>
    <property type="project" value="UniProtKB-SubCell"/>
</dbReference>
<dbReference type="GO" id="GO:0046872">
    <property type="term" value="F:metal ion binding"/>
    <property type="evidence" value="ECO:0007669"/>
    <property type="project" value="UniProtKB-KW"/>
</dbReference>
<feature type="chain" id="PRO_0000262969" description="Probable alpha-fetoprotein">
    <location>
        <begin position="1"/>
        <end position="11" status="greater than"/>
    </location>
</feature>
<feature type="domain" description="Albumin" evidence="3">
    <location>
        <begin position="1"/>
        <end position="11" status="greater than"/>
    </location>
</feature>
<feature type="non-terminal residue" evidence="5">
    <location>
        <position position="11"/>
    </location>
</feature>
<evidence type="ECO:0000250" key="1"/>
<evidence type="ECO:0000250" key="2">
    <source>
        <dbReference type="UniProtKB" id="P02771"/>
    </source>
</evidence>
<evidence type="ECO:0000255" key="3">
    <source>
        <dbReference type="PROSITE-ProRule" id="PRU00769"/>
    </source>
</evidence>
<evidence type="ECO:0000269" key="4">
    <source>
    </source>
</evidence>
<evidence type="ECO:0000303" key="5">
    <source>
    </source>
</evidence>
<evidence type="ECO:0000305" key="6"/>
<protein>
    <recommendedName>
        <fullName>Probable alpha-fetoprotein</fullName>
    </recommendedName>
    <alternativeName>
        <fullName>Alpha-1-fetoprotein</fullName>
    </alternativeName>
    <alternativeName>
        <fullName>Alpha-fetoglobulin</fullName>
    </alternativeName>
</protein>
<keyword id="KW-0186">Copper</keyword>
<keyword id="KW-0903">Direct protein sequencing</keyword>
<keyword id="KW-0325">Glycoprotein</keyword>
<keyword id="KW-0479">Metal-binding</keyword>
<keyword id="KW-0533">Nickel</keyword>
<keyword id="KW-0964">Secreted</keyword>